<comment type="similarity">
    <text evidence="2">Belongs to the LysR transcriptional regulatory family.</text>
</comment>
<comment type="sequence caution" evidence="2">
    <conflict type="erroneous initiation">
        <sequence resource="EMBL-CDS" id="AAA69088"/>
    </conflict>
    <text>Extended N-terminus.</text>
</comment>
<reference key="1">
    <citation type="journal article" date="1997" name="Science">
        <title>The complete genome sequence of Escherichia coli K-12.</title>
        <authorList>
            <person name="Blattner F.R."/>
            <person name="Plunkett G. III"/>
            <person name="Bloch C.A."/>
            <person name="Perna N.T."/>
            <person name="Burland V."/>
            <person name="Riley M."/>
            <person name="Collado-Vides J."/>
            <person name="Glasner J.D."/>
            <person name="Rode C.K."/>
            <person name="Mayhew G.F."/>
            <person name="Gregor J."/>
            <person name="Davis N.W."/>
            <person name="Kirkpatrick H.A."/>
            <person name="Goeden M.A."/>
            <person name="Rose D.J."/>
            <person name="Mau B."/>
            <person name="Shao Y."/>
        </authorList>
    </citation>
    <scope>NUCLEOTIDE SEQUENCE [LARGE SCALE GENOMIC DNA]</scope>
    <source>
        <strain>K12 / MG1655 / ATCC 47076</strain>
    </source>
</reference>
<reference key="2">
    <citation type="journal article" date="2006" name="Mol. Syst. Biol.">
        <title>Highly accurate genome sequences of Escherichia coli K-12 strains MG1655 and W3110.</title>
        <authorList>
            <person name="Hayashi K."/>
            <person name="Morooka N."/>
            <person name="Yamamoto Y."/>
            <person name="Fujita K."/>
            <person name="Isono K."/>
            <person name="Choi S."/>
            <person name="Ohtsubo E."/>
            <person name="Baba T."/>
            <person name="Wanner B.L."/>
            <person name="Mori H."/>
            <person name="Horiuchi T."/>
        </authorList>
    </citation>
    <scope>NUCLEOTIDE SEQUENCE [LARGE SCALE GENOMIC DNA]</scope>
    <source>
        <strain>K12 / W3110 / ATCC 27325 / DSM 5911</strain>
    </source>
</reference>
<dbReference type="EMBL" id="U28377">
    <property type="protein sequence ID" value="AAA69088.1"/>
    <property type="status" value="ALT_INIT"/>
    <property type="molecule type" value="Genomic_DNA"/>
</dbReference>
<dbReference type="EMBL" id="U00096">
    <property type="protein sequence ID" value="AAC75958.2"/>
    <property type="molecule type" value="Genomic_DNA"/>
</dbReference>
<dbReference type="EMBL" id="AP009048">
    <property type="protein sequence ID" value="BAE76985.1"/>
    <property type="molecule type" value="Genomic_DNA"/>
</dbReference>
<dbReference type="PIR" id="H65076">
    <property type="entry name" value="H65076"/>
</dbReference>
<dbReference type="RefSeq" id="NP_417396.4">
    <property type="nucleotide sequence ID" value="NC_000913.3"/>
</dbReference>
<dbReference type="RefSeq" id="WP_000350807.1">
    <property type="nucleotide sequence ID" value="NZ_SSZK01000003.1"/>
</dbReference>
<dbReference type="SMR" id="P52044"/>
<dbReference type="BioGRID" id="4263514">
    <property type="interactions" value="110"/>
</dbReference>
<dbReference type="FunCoup" id="P52044">
    <property type="interactions" value="39"/>
</dbReference>
<dbReference type="STRING" id="511145.b2921"/>
<dbReference type="PaxDb" id="511145-b2921"/>
<dbReference type="DNASU" id="947401"/>
<dbReference type="EnsemblBacteria" id="AAC75958">
    <property type="protein sequence ID" value="AAC75958"/>
    <property type="gene ID" value="b2921"/>
</dbReference>
<dbReference type="GeneID" id="947401"/>
<dbReference type="KEGG" id="ecj:JW5476"/>
<dbReference type="KEGG" id="eco:b2921"/>
<dbReference type="KEGG" id="ecoc:C3026_16005"/>
<dbReference type="PATRIC" id="fig|1411691.4.peg.3811"/>
<dbReference type="EchoBASE" id="EB2801"/>
<dbReference type="eggNOG" id="COG0583">
    <property type="taxonomic scope" value="Bacteria"/>
</dbReference>
<dbReference type="HOGENOM" id="CLU_081242_0_0_6"/>
<dbReference type="InParanoid" id="P52044"/>
<dbReference type="OMA" id="AMLDAYM"/>
<dbReference type="OrthoDB" id="464481at2"/>
<dbReference type="PhylomeDB" id="P52044"/>
<dbReference type="BioCyc" id="EcoCyc:G7518-MONOMER"/>
<dbReference type="PRO" id="PR:P52044"/>
<dbReference type="Proteomes" id="UP000000625">
    <property type="component" value="Chromosome"/>
</dbReference>
<dbReference type="GO" id="GO:0003677">
    <property type="term" value="F:DNA binding"/>
    <property type="evidence" value="ECO:0007669"/>
    <property type="project" value="UniProtKB-KW"/>
</dbReference>
<dbReference type="GO" id="GO:0003700">
    <property type="term" value="F:DNA-binding transcription factor activity"/>
    <property type="evidence" value="ECO:0000318"/>
    <property type="project" value="GO_Central"/>
</dbReference>
<dbReference type="GO" id="GO:0006974">
    <property type="term" value="P:DNA damage response"/>
    <property type="evidence" value="ECO:0000270"/>
    <property type="project" value="EcoliWiki"/>
</dbReference>
<dbReference type="GO" id="GO:0006355">
    <property type="term" value="P:regulation of DNA-templated transcription"/>
    <property type="evidence" value="ECO:0000318"/>
    <property type="project" value="GO_Central"/>
</dbReference>
<dbReference type="CDD" id="cd05466">
    <property type="entry name" value="PBP2_LTTR_substrate"/>
    <property type="match status" value="1"/>
</dbReference>
<dbReference type="FunFam" id="1.10.10.10:FF:000325">
    <property type="entry name" value="Transcriptional regulator, LysR family"/>
    <property type="match status" value="1"/>
</dbReference>
<dbReference type="Gene3D" id="1.10.10.10">
    <property type="entry name" value="Winged helix-like DNA-binding domain superfamily/Winged helix DNA-binding domain"/>
    <property type="match status" value="1"/>
</dbReference>
<dbReference type="InterPro" id="IPR050176">
    <property type="entry name" value="LTTR"/>
</dbReference>
<dbReference type="InterPro" id="IPR005119">
    <property type="entry name" value="LysR_subst-bd"/>
</dbReference>
<dbReference type="InterPro" id="IPR000847">
    <property type="entry name" value="Tscrpt_reg_HTH_LysR"/>
</dbReference>
<dbReference type="InterPro" id="IPR036388">
    <property type="entry name" value="WH-like_DNA-bd_sf"/>
</dbReference>
<dbReference type="InterPro" id="IPR036390">
    <property type="entry name" value="WH_DNA-bd_sf"/>
</dbReference>
<dbReference type="NCBIfam" id="NF047842">
    <property type="entry name" value="station_TF_SrsR"/>
    <property type="match status" value="1"/>
</dbReference>
<dbReference type="PANTHER" id="PTHR30579:SF0">
    <property type="entry name" value="HTH-TYPE TRANSCRIPTIONAL ACTIVATOR ALLS"/>
    <property type="match status" value="1"/>
</dbReference>
<dbReference type="PANTHER" id="PTHR30579">
    <property type="entry name" value="TRANSCRIPTIONAL REGULATOR"/>
    <property type="match status" value="1"/>
</dbReference>
<dbReference type="Pfam" id="PF00126">
    <property type="entry name" value="HTH_1"/>
    <property type="match status" value="1"/>
</dbReference>
<dbReference type="Pfam" id="PF03466">
    <property type="entry name" value="LysR_substrate"/>
    <property type="match status" value="1"/>
</dbReference>
<dbReference type="SUPFAM" id="SSF53850">
    <property type="entry name" value="Periplasmic binding protein-like II"/>
    <property type="match status" value="1"/>
</dbReference>
<dbReference type="SUPFAM" id="SSF46785">
    <property type="entry name" value="Winged helix' DNA-binding domain"/>
    <property type="match status" value="1"/>
</dbReference>
<dbReference type="PROSITE" id="PS50931">
    <property type="entry name" value="HTH_LYSR"/>
    <property type="match status" value="1"/>
</dbReference>
<protein>
    <recommendedName>
        <fullName>Uncharacterized HTH-type transcriptional regulator YgfI</fullName>
    </recommendedName>
</protein>
<organism>
    <name type="scientific">Escherichia coli (strain K12)</name>
    <dbReference type="NCBI Taxonomy" id="83333"/>
    <lineage>
        <taxon>Bacteria</taxon>
        <taxon>Pseudomonadati</taxon>
        <taxon>Pseudomonadota</taxon>
        <taxon>Gammaproteobacteria</taxon>
        <taxon>Enterobacterales</taxon>
        <taxon>Enterobacteriaceae</taxon>
        <taxon>Escherichia</taxon>
    </lineage>
</organism>
<keyword id="KW-0238">DNA-binding</keyword>
<keyword id="KW-1185">Reference proteome</keyword>
<keyword id="KW-0804">Transcription</keyword>
<keyword id="KW-0805">Transcription regulation</keyword>
<accession>P52044</accession>
<accession>Q2M9S1</accession>
<name>YGFI_ECOLI</name>
<feature type="chain" id="PRO_0000105794" description="Uncharacterized HTH-type transcriptional regulator YgfI">
    <location>
        <begin position="1"/>
        <end position="298"/>
    </location>
</feature>
<feature type="domain" description="HTH lysR-type" evidence="1">
    <location>
        <begin position="1"/>
        <end position="61"/>
    </location>
</feature>
<feature type="DNA-binding region" description="H-T-H motif" evidence="1">
    <location>
        <begin position="21"/>
        <end position="40"/>
    </location>
</feature>
<gene>
    <name type="primary">ygfI</name>
    <name type="ordered locus">b2921</name>
    <name type="ordered locus">JW5476</name>
</gene>
<evidence type="ECO:0000255" key="1">
    <source>
        <dbReference type="PROSITE-ProRule" id="PRU00253"/>
    </source>
</evidence>
<evidence type="ECO:0000305" key="2"/>
<proteinExistence type="inferred from homology"/>
<sequence>MDIFISKKMRNFILLAQTNNIARAAEKIHMTASPFGKSIAALEEQIGYTLFTRKDNNISLNKAGQELYQKLFPVYQRLSAIDNEIHNSGRRSREIVIGIDNTYPTIIFDQLISLGDKYEGVTAQPVEFSENGVIDNLFDRQLDFIISPQHVSARVQELENLTISELPPLRLGFLVSRRYEERQEQELLQELPWLQMRFQNRANFEAMIDANMRPCGINPTIIYRPYSFMAKISAVERGHFLTVIPHFAWRLVNPATLKYFDAPHRPMYMQEYLYSIRNHRYTATMLQHIAEDRDGTSH</sequence>